<comment type="function">
    <text>Inhibitor of chymotrypsin.</text>
</comment>
<comment type="subunit">
    <text>Heterodimer of an A chain and a B chain, linked by a disulfide bond.</text>
</comment>
<comment type="similarity">
    <text evidence="1">Belongs to the protease inhibitor I13 (potato type I serine protease inhibitor) family.</text>
</comment>
<name>CYTA_THETS</name>
<proteinExistence type="evidence at protein level"/>
<feature type="chain" id="PRO_0000217657" description="Cytin chain A">
    <location>
        <begin position="1"/>
        <end position="43"/>
    </location>
</feature>
<feature type="disulfide bond" description="Interchain">
    <location>
        <position position="34"/>
    </location>
</feature>
<organism>
    <name type="scientific">Theromyzon tessulatum</name>
    <name type="common">Duck leech</name>
    <dbReference type="NCBI Taxonomy" id="13286"/>
    <lineage>
        <taxon>Eukaryota</taxon>
        <taxon>Metazoa</taxon>
        <taxon>Spiralia</taxon>
        <taxon>Lophotrochozoa</taxon>
        <taxon>Annelida</taxon>
        <taxon>Clitellata</taxon>
        <taxon>Hirudinea</taxon>
        <taxon>Rhynchobdellida</taxon>
        <taxon>Glossiphoniidae</taxon>
        <taxon>Theromyzon</taxon>
    </lineage>
</organism>
<dbReference type="MEROPS" id="I15.011"/>
<dbReference type="GO" id="GO:0004867">
    <property type="term" value="F:serine-type endopeptidase inhibitor activity"/>
    <property type="evidence" value="ECO:0007669"/>
    <property type="project" value="UniProtKB-KW"/>
</dbReference>
<evidence type="ECO:0000305" key="1"/>
<keyword id="KW-0903">Direct protein sequencing</keyword>
<keyword id="KW-1015">Disulfide bond</keyword>
<keyword id="KW-0646">Protease inhibitor</keyword>
<keyword id="KW-0722">Serine protease inhibitor</keyword>
<sequence>AEVNPPEAFNQDVDTYLKIFRNGRYPLDKMAVICSQTGFKLDK</sequence>
<protein>
    <recommendedName>
        <fullName>Cytin chain A</fullName>
    </recommendedName>
</protein>
<accession>P81063</accession>
<reference key="1">
    <citation type="journal article" date="1997" name="Eur. J. Biochem.">
        <title>Amino-acid-sequence determination and biological activity of cytin, a naturally occurring specific chymotrypsin inhibitor from the leech Theromyzon tessulatum.</title>
        <authorList>
            <person name="Chopin V."/>
            <person name="Bilfinger T.V."/>
            <person name="Stefano G.B."/>
            <person name="Hatiar I."/>
            <person name="Salzet M."/>
        </authorList>
    </citation>
    <scope>PROTEIN SEQUENCE</scope>
</reference>